<dbReference type="EMBL" id="CP001127">
    <property type="protein sequence ID" value="ACF92844.1"/>
    <property type="molecule type" value="Genomic_DNA"/>
</dbReference>
<dbReference type="RefSeq" id="WP_000983115.1">
    <property type="nucleotide sequence ID" value="NC_011094.1"/>
</dbReference>
<dbReference type="SMR" id="B4TQF9"/>
<dbReference type="KEGG" id="sew:SeSA_A2663"/>
<dbReference type="HOGENOM" id="CLU_030174_1_0_6"/>
<dbReference type="Proteomes" id="UP000001865">
    <property type="component" value="Chromosome"/>
</dbReference>
<dbReference type="GO" id="GO:0032153">
    <property type="term" value="C:cell division site"/>
    <property type="evidence" value="ECO:0007669"/>
    <property type="project" value="UniProtKB-UniRule"/>
</dbReference>
<dbReference type="GO" id="GO:0005886">
    <property type="term" value="C:plasma membrane"/>
    <property type="evidence" value="ECO:0007669"/>
    <property type="project" value="UniProtKB-SubCell"/>
</dbReference>
<dbReference type="GO" id="GO:0000917">
    <property type="term" value="P:division septum assembly"/>
    <property type="evidence" value="ECO:0007669"/>
    <property type="project" value="TreeGrafter"/>
</dbReference>
<dbReference type="GO" id="GO:0043093">
    <property type="term" value="P:FtsZ-dependent cytokinesis"/>
    <property type="evidence" value="ECO:0007669"/>
    <property type="project" value="UniProtKB-UniRule"/>
</dbReference>
<dbReference type="CDD" id="cd00231">
    <property type="entry name" value="ZipA"/>
    <property type="match status" value="1"/>
</dbReference>
<dbReference type="FunFam" id="3.30.1400.10:FF:000001">
    <property type="entry name" value="Cell division protein ZipA"/>
    <property type="match status" value="1"/>
</dbReference>
<dbReference type="Gene3D" id="3.30.1400.10">
    <property type="entry name" value="ZipA, C-terminal FtsZ-binding domain"/>
    <property type="match status" value="1"/>
</dbReference>
<dbReference type="HAMAP" id="MF_00509">
    <property type="entry name" value="ZipA"/>
    <property type="match status" value="1"/>
</dbReference>
<dbReference type="InterPro" id="IPR011919">
    <property type="entry name" value="Cell_div_ZipA"/>
</dbReference>
<dbReference type="InterPro" id="IPR007449">
    <property type="entry name" value="ZipA_FtsZ-bd_C"/>
</dbReference>
<dbReference type="InterPro" id="IPR036765">
    <property type="entry name" value="ZipA_FtsZ-bd_C_sf"/>
</dbReference>
<dbReference type="NCBIfam" id="TIGR02205">
    <property type="entry name" value="septum_zipA"/>
    <property type="match status" value="1"/>
</dbReference>
<dbReference type="PANTHER" id="PTHR38685">
    <property type="entry name" value="CELL DIVISION PROTEIN ZIPA"/>
    <property type="match status" value="1"/>
</dbReference>
<dbReference type="PANTHER" id="PTHR38685:SF1">
    <property type="entry name" value="CELL DIVISION PROTEIN ZIPA"/>
    <property type="match status" value="1"/>
</dbReference>
<dbReference type="Pfam" id="PF04354">
    <property type="entry name" value="ZipA_C"/>
    <property type="match status" value="1"/>
</dbReference>
<dbReference type="SMART" id="SM00771">
    <property type="entry name" value="ZipA_C"/>
    <property type="match status" value="1"/>
</dbReference>
<dbReference type="SUPFAM" id="SSF64383">
    <property type="entry name" value="Cell-division protein ZipA, C-terminal domain"/>
    <property type="match status" value="1"/>
</dbReference>
<organism>
    <name type="scientific">Salmonella schwarzengrund (strain CVM19633)</name>
    <dbReference type="NCBI Taxonomy" id="439843"/>
    <lineage>
        <taxon>Bacteria</taxon>
        <taxon>Pseudomonadati</taxon>
        <taxon>Pseudomonadota</taxon>
        <taxon>Gammaproteobacteria</taxon>
        <taxon>Enterobacterales</taxon>
        <taxon>Enterobacteriaceae</taxon>
        <taxon>Salmonella</taxon>
    </lineage>
</organism>
<accession>B4TQF9</accession>
<protein>
    <recommendedName>
        <fullName evidence="1">Cell division protein ZipA</fullName>
    </recommendedName>
</protein>
<feature type="chain" id="PRO_1000127231" description="Cell division protein ZipA">
    <location>
        <begin position="1"/>
        <end position="328"/>
    </location>
</feature>
<feature type="topological domain" description="Periplasmic" evidence="1">
    <location>
        <begin position="1"/>
        <end position="6"/>
    </location>
</feature>
<feature type="transmembrane region" description="Helical" evidence="1">
    <location>
        <begin position="7"/>
        <end position="27"/>
    </location>
</feature>
<feature type="topological domain" description="Cytoplasmic" evidence="1">
    <location>
        <begin position="28"/>
        <end position="328"/>
    </location>
</feature>
<feature type="region of interest" description="Disordered" evidence="2">
    <location>
        <begin position="42"/>
        <end position="178"/>
    </location>
</feature>
<feature type="compositionally biased region" description="Acidic residues" evidence="2">
    <location>
        <begin position="51"/>
        <end position="63"/>
    </location>
</feature>
<feature type="compositionally biased region" description="Low complexity" evidence="2">
    <location>
        <begin position="85"/>
        <end position="102"/>
    </location>
</feature>
<feature type="compositionally biased region" description="Low complexity" evidence="2">
    <location>
        <begin position="111"/>
        <end position="132"/>
    </location>
</feature>
<feature type="compositionally biased region" description="Pro residues" evidence="2">
    <location>
        <begin position="133"/>
        <end position="162"/>
    </location>
</feature>
<feature type="compositionally biased region" description="Low complexity" evidence="2">
    <location>
        <begin position="163"/>
        <end position="178"/>
    </location>
</feature>
<evidence type="ECO:0000255" key="1">
    <source>
        <dbReference type="HAMAP-Rule" id="MF_00509"/>
    </source>
</evidence>
<evidence type="ECO:0000256" key="2">
    <source>
        <dbReference type="SAM" id="MobiDB-lite"/>
    </source>
</evidence>
<reference key="1">
    <citation type="journal article" date="2011" name="J. Bacteriol.">
        <title>Comparative genomics of 28 Salmonella enterica isolates: evidence for CRISPR-mediated adaptive sublineage evolution.</title>
        <authorList>
            <person name="Fricke W.F."/>
            <person name="Mammel M.K."/>
            <person name="McDermott P.F."/>
            <person name="Tartera C."/>
            <person name="White D.G."/>
            <person name="Leclerc J.E."/>
            <person name="Ravel J."/>
            <person name="Cebula T.A."/>
        </authorList>
    </citation>
    <scope>NUCLEOTIDE SEQUENCE [LARGE SCALE GENOMIC DNA]</scope>
    <source>
        <strain>CVM19633</strain>
    </source>
</reference>
<comment type="function">
    <text evidence="1">Essential cell division protein that stabilizes the FtsZ protofilaments by cross-linking them and that serves as a cytoplasmic membrane anchor for the Z ring. Also required for the recruitment to the septal ring of downstream cell division proteins.</text>
</comment>
<comment type="subunit">
    <text evidence="1">Interacts with FtsZ via their C-terminal domains.</text>
</comment>
<comment type="subcellular location">
    <subcellularLocation>
        <location evidence="1">Cell inner membrane</location>
        <topology evidence="1">Single-pass type I membrane protein</topology>
    </subcellularLocation>
    <text evidence="1">Localizes to the Z ring in an FtsZ-dependent manner.</text>
</comment>
<comment type="similarity">
    <text evidence="1">Belongs to the ZipA family.</text>
</comment>
<name>ZIPA_SALSV</name>
<keyword id="KW-0131">Cell cycle</keyword>
<keyword id="KW-0132">Cell division</keyword>
<keyword id="KW-0997">Cell inner membrane</keyword>
<keyword id="KW-1003">Cell membrane</keyword>
<keyword id="KW-0472">Membrane</keyword>
<keyword id="KW-0812">Transmembrane</keyword>
<keyword id="KW-1133">Transmembrane helix</keyword>
<gene>
    <name evidence="1" type="primary">zipA</name>
    <name type="ordered locus">SeSA_A2663</name>
</gene>
<proteinExistence type="inferred from homology"/>
<sequence length="328" mass="36358">MMQDLRLILIIVGAIAIIALLVHGFWTSRKERSSMFRDRPLKRMKSKRDDDSYDDDVEEDEGVGEVRVHRVNHAPGQPQEHDAPRQSPQHQYQPPYASAQPRPAAPPQPQAPMQQPVQQPVQPAPQPQQVQPSAPPVQPPQQQPAPPSQTPQPVAQPAPPPSAQTFQPAEPVVEAEPVVEEAPVVEKPQRKEAVIIMNVAAHHGSELNGEVLLNSIQQSGFKFGDMNIFHRHLSPDGSGPALFSLANMVNPGTFDPEMTDFTTPGVTIFMQVPSYGDALQNFKLMLQSAQHIADEVGGVVLDDQRRMMTPQKLREYQDRIREVMDANA</sequence>